<protein>
    <recommendedName>
        <fullName>Homeobox protein Hox-A2</fullName>
    </recommendedName>
</protein>
<evidence type="ECO:0000250" key="1"/>
<evidence type="ECO:0000255" key="2">
    <source>
        <dbReference type="PROSITE-ProRule" id="PRU00108"/>
    </source>
</evidence>
<evidence type="ECO:0000256" key="3">
    <source>
        <dbReference type="SAM" id="MobiDB-lite"/>
    </source>
</evidence>
<evidence type="ECO:0000305" key="4"/>
<organism>
    <name type="scientific">Callithrix jacchus</name>
    <name type="common">White-tufted-ear marmoset</name>
    <dbReference type="NCBI Taxonomy" id="9483"/>
    <lineage>
        <taxon>Eukaryota</taxon>
        <taxon>Metazoa</taxon>
        <taxon>Chordata</taxon>
        <taxon>Craniata</taxon>
        <taxon>Vertebrata</taxon>
        <taxon>Euteleostomi</taxon>
        <taxon>Mammalia</taxon>
        <taxon>Eutheria</taxon>
        <taxon>Euarchontoglires</taxon>
        <taxon>Primates</taxon>
        <taxon>Haplorrhini</taxon>
        <taxon>Platyrrhini</taxon>
        <taxon>Cebidae</taxon>
        <taxon>Callitrichinae</taxon>
        <taxon>Callithrix</taxon>
        <taxon>Callithrix</taxon>
    </lineage>
</organism>
<feature type="chain" id="PRO_0000333801" description="Homeobox protein Hox-A2">
    <location>
        <begin position="1"/>
        <end position="375"/>
    </location>
</feature>
<feature type="DNA-binding region" description="Homeobox" evidence="2">
    <location>
        <begin position="142"/>
        <end position="201"/>
    </location>
</feature>
<feature type="region of interest" description="Disordered" evidence="3">
    <location>
        <begin position="41"/>
        <end position="93"/>
    </location>
</feature>
<feature type="region of interest" description="Disordered" evidence="3">
    <location>
        <begin position="197"/>
        <end position="228"/>
    </location>
</feature>
<feature type="region of interest" description="Disordered" evidence="3">
    <location>
        <begin position="257"/>
        <end position="278"/>
    </location>
</feature>
<feature type="short sequence motif" description="Antp-type hexapeptide">
    <location>
        <begin position="94"/>
        <end position="99"/>
    </location>
</feature>
<dbReference type="EMBL" id="DP000594">
    <property type="protein sequence ID" value="ABZ80206.1"/>
    <property type="molecule type" value="Genomic_DNA"/>
</dbReference>
<dbReference type="RefSeq" id="XP_002751500.1">
    <property type="nucleotide sequence ID" value="XM_002751454.6"/>
</dbReference>
<dbReference type="SMR" id="B0VXK3"/>
<dbReference type="FunCoup" id="B0VXK3">
    <property type="interactions" value="1059"/>
</dbReference>
<dbReference type="STRING" id="9483.ENSCJAP00000014849"/>
<dbReference type="Ensembl" id="ENSCJAT00000015665.3">
    <property type="protein sequence ID" value="ENSCJAP00000014849.2"/>
    <property type="gene ID" value="ENSCJAG00000008032.3"/>
</dbReference>
<dbReference type="GeneID" id="100399103"/>
<dbReference type="KEGG" id="cjc:100399103"/>
<dbReference type="CTD" id="3199"/>
<dbReference type="eggNOG" id="KOG0489">
    <property type="taxonomic scope" value="Eukaryota"/>
</dbReference>
<dbReference type="GeneTree" id="ENSGT00940000162533"/>
<dbReference type="InParanoid" id="B0VXK3"/>
<dbReference type="OMA" id="IHDFQPF"/>
<dbReference type="OrthoDB" id="6159439at2759"/>
<dbReference type="TreeFam" id="TF317730"/>
<dbReference type="Proteomes" id="UP000008225">
    <property type="component" value="Chromosome 8"/>
</dbReference>
<dbReference type="Bgee" id="ENSCJAG00000008032">
    <property type="expression patterns" value="Expressed in kidney and 2 other cell types or tissues"/>
</dbReference>
<dbReference type="GO" id="GO:0005654">
    <property type="term" value="C:nucleoplasm"/>
    <property type="evidence" value="ECO:0007669"/>
    <property type="project" value="Ensembl"/>
</dbReference>
<dbReference type="GO" id="GO:0001227">
    <property type="term" value="F:DNA-binding transcription repressor activity, RNA polymerase II-specific"/>
    <property type="evidence" value="ECO:0007669"/>
    <property type="project" value="Ensembl"/>
</dbReference>
<dbReference type="GO" id="GO:0000978">
    <property type="term" value="F:RNA polymerase II cis-regulatory region sequence-specific DNA binding"/>
    <property type="evidence" value="ECO:0007669"/>
    <property type="project" value="Ensembl"/>
</dbReference>
<dbReference type="GO" id="GO:0009952">
    <property type="term" value="P:anterior/posterior pattern specification"/>
    <property type="evidence" value="ECO:0007669"/>
    <property type="project" value="Ensembl"/>
</dbReference>
<dbReference type="GO" id="GO:0035284">
    <property type="term" value="P:brain segmentation"/>
    <property type="evidence" value="ECO:0007669"/>
    <property type="project" value="Ensembl"/>
</dbReference>
<dbReference type="GO" id="GO:0001709">
    <property type="term" value="P:cell fate determination"/>
    <property type="evidence" value="ECO:0007669"/>
    <property type="project" value="Ensembl"/>
</dbReference>
<dbReference type="GO" id="GO:0071300">
    <property type="term" value="P:cellular response to retinoic acid"/>
    <property type="evidence" value="ECO:0007669"/>
    <property type="project" value="Ensembl"/>
</dbReference>
<dbReference type="GO" id="GO:0009953">
    <property type="term" value="P:dorsal/ventral pattern formation"/>
    <property type="evidence" value="ECO:0007669"/>
    <property type="project" value="Ensembl"/>
</dbReference>
<dbReference type="GO" id="GO:0048703">
    <property type="term" value="P:embryonic viscerocranium morphogenesis"/>
    <property type="evidence" value="ECO:0007669"/>
    <property type="project" value="Ensembl"/>
</dbReference>
<dbReference type="GO" id="GO:0042474">
    <property type="term" value="P:middle ear morphogenesis"/>
    <property type="evidence" value="ECO:0007669"/>
    <property type="project" value="Ensembl"/>
</dbReference>
<dbReference type="GO" id="GO:0008045">
    <property type="term" value="P:motor neuron axon guidance"/>
    <property type="evidence" value="ECO:0007669"/>
    <property type="project" value="Ensembl"/>
</dbReference>
<dbReference type="GO" id="GO:0061061">
    <property type="term" value="P:muscle structure development"/>
    <property type="evidence" value="ECO:0007669"/>
    <property type="project" value="Ensembl"/>
</dbReference>
<dbReference type="GO" id="GO:0045665">
    <property type="term" value="P:negative regulation of neuron differentiation"/>
    <property type="evidence" value="ECO:0007669"/>
    <property type="project" value="Ensembl"/>
</dbReference>
<dbReference type="GO" id="GO:0045668">
    <property type="term" value="P:negative regulation of osteoblast differentiation"/>
    <property type="evidence" value="ECO:0007669"/>
    <property type="project" value="Ensembl"/>
</dbReference>
<dbReference type="GO" id="GO:0002076">
    <property type="term" value="P:osteoblast development"/>
    <property type="evidence" value="ECO:0007669"/>
    <property type="project" value="Ensembl"/>
</dbReference>
<dbReference type="GO" id="GO:0060037">
    <property type="term" value="P:pharyngeal system development"/>
    <property type="evidence" value="ECO:0007669"/>
    <property type="project" value="Ensembl"/>
</dbReference>
<dbReference type="GO" id="GO:0045944">
    <property type="term" value="P:positive regulation of transcription by RNA polymerase II"/>
    <property type="evidence" value="ECO:0007669"/>
    <property type="project" value="Ensembl"/>
</dbReference>
<dbReference type="GO" id="GO:0021568">
    <property type="term" value="P:rhombomere 2 development"/>
    <property type="evidence" value="ECO:0007669"/>
    <property type="project" value="Ensembl"/>
</dbReference>
<dbReference type="GO" id="GO:0021658">
    <property type="term" value="P:rhombomere 3 morphogenesis"/>
    <property type="evidence" value="ECO:0007669"/>
    <property type="project" value="Ensembl"/>
</dbReference>
<dbReference type="GO" id="GO:0007379">
    <property type="term" value="P:segment specification"/>
    <property type="evidence" value="ECO:0007669"/>
    <property type="project" value="Ensembl"/>
</dbReference>
<dbReference type="CDD" id="cd00086">
    <property type="entry name" value="homeodomain"/>
    <property type="match status" value="1"/>
</dbReference>
<dbReference type="FunFam" id="1.10.10.60:FF:000145">
    <property type="entry name" value="homeobox protein Hox-A2"/>
    <property type="match status" value="1"/>
</dbReference>
<dbReference type="Gene3D" id="1.10.10.60">
    <property type="entry name" value="Homeodomain-like"/>
    <property type="match status" value="1"/>
</dbReference>
<dbReference type="InterPro" id="IPR001356">
    <property type="entry name" value="HD"/>
</dbReference>
<dbReference type="InterPro" id="IPR020479">
    <property type="entry name" value="HD_metazoa"/>
</dbReference>
<dbReference type="InterPro" id="IPR001827">
    <property type="entry name" value="Homeobox_Antennapedia_CS"/>
</dbReference>
<dbReference type="InterPro" id="IPR017970">
    <property type="entry name" value="Homeobox_CS"/>
</dbReference>
<dbReference type="InterPro" id="IPR009057">
    <property type="entry name" value="Homeodomain-like_sf"/>
</dbReference>
<dbReference type="PANTHER" id="PTHR45664:SF3">
    <property type="entry name" value="HOMEOBOX PROTEIN HOX-A2"/>
    <property type="match status" value="1"/>
</dbReference>
<dbReference type="PANTHER" id="PTHR45664">
    <property type="entry name" value="PROTEIN ZERKNUELLT 1-RELATED"/>
    <property type="match status" value="1"/>
</dbReference>
<dbReference type="Pfam" id="PF00046">
    <property type="entry name" value="Homeodomain"/>
    <property type="match status" value="1"/>
</dbReference>
<dbReference type="PRINTS" id="PR00024">
    <property type="entry name" value="HOMEOBOX"/>
</dbReference>
<dbReference type="SMART" id="SM00389">
    <property type="entry name" value="HOX"/>
    <property type="match status" value="1"/>
</dbReference>
<dbReference type="SUPFAM" id="SSF46689">
    <property type="entry name" value="Homeodomain-like"/>
    <property type="match status" value="1"/>
</dbReference>
<dbReference type="PROSITE" id="PS00032">
    <property type="entry name" value="ANTENNAPEDIA"/>
    <property type="match status" value="1"/>
</dbReference>
<dbReference type="PROSITE" id="PS00027">
    <property type="entry name" value="HOMEOBOX_1"/>
    <property type="match status" value="1"/>
</dbReference>
<dbReference type="PROSITE" id="PS50071">
    <property type="entry name" value="HOMEOBOX_2"/>
    <property type="match status" value="1"/>
</dbReference>
<keyword id="KW-0217">Developmental protein</keyword>
<keyword id="KW-0238">DNA-binding</keyword>
<keyword id="KW-0371">Homeobox</keyword>
<keyword id="KW-0539">Nucleus</keyword>
<keyword id="KW-1185">Reference proteome</keyword>
<keyword id="KW-0804">Transcription</keyword>
<keyword id="KW-0805">Transcription regulation</keyword>
<reference key="1">
    <citation type="submission" date="2008-02" db="EMBL/GenBank/DDBJ databases">
        <title>NISC comparative sequencing initiative.</title>
        <authorList>
            <person name="Antonellis A."/>
            <person name="Benjamin B."/>
            <person name="Blakesley R.W."/>
            <person name="Bouffard G.G."/>
            <person name="Brinkley C."/>
            <person name="Brooks S."/>
            <person name="Chu G."/>
            <person name="Chub I."/>
            <person name="Coleman H."/>
            <person name="Fuksenko T."/>
            <person name="Gestole M."/>
            <person name="Gregory M."/>
            <person name="Guan X."/>
            <person name="Gupta J."/>
            <person name="Gurson N."/>
            <person name="Han E."/>
            <person name="Han J."/>
            <person name="Hansen N."/>
            <person name="Hargrove A."/>
            <person name="Hines-Harris K."/>
            <person name="Ho S.-L."/>
            <person name="Hu P."/>
            <person name="Hunter G."/>
            <person name="Hurle B."/>
            <person name="Idol J.R."/>
            <person name="Johnson T."/>
            <person name="Knight E."/>
            <person name="Kwong P."/>
            <person name="Lee-Lin S.-Q."/>
            <person name="Legaspi R."/>
            <person name="Madden M."/>
            <person name="Maduro Q.L."/>
            <person name="Maduro V.B."/>
            <person name="Margulies E.H."/>
            <person name="Masiello C."/>
            <person name="Maskeri B."/>
            <person name="McDowell J."/>
            <person name="Merkulov G."/>
            <person name="Montemayor C."/>
            <person name="Mullikin J.C."/>
            <person name="Park M."/>
            <person name="Prasad A."/>
            <person name="Ramsahoye C."/>
            <person name="Reddix-Dugue N."/>
            <person name="Riebow N."/>
            <person name="Schandler K."/>
            <person name="Schueler M.G."/>
            <person name="Sison C."/>
            <person name="Smith L."/>
            <person name="Stantripop S."/>
            <person name="Thomas J.W."/>
            <person name="Thomas P.J."/>
            <person name="Tsipouri V."/>
            <person name="Young A."/>
            <person name="Green E.D."/>
        </authorList>
    </citation>
    <scope>NUCLEOTIDE SEQUENCE [LARGE SCALE GENOMIC DNA]</scope>
</reference>
<sequence>MNYEFEREIGFINSQPSLAECLTSFPPVADTFQSSSIKTSSLSHSTLIPPPFEQTIPSLNPGSHPRHGAGGRPKPSPAGSRGSPVPAGALQPPEYPWMKEKKAAKKTALPPASAAAAAAATGPACLSHKESLEIADGSGGGSRRLRTAYTNTQLLELEKEFHFNKYLCRPRRVEIAALLDLTERQVKVWFQNRRMKHKRQTQCKENQNSEGKCKSLEDSEKVEDDDEEKTLFEQALSVSGALLEREGYTFQQNTLSQQQAPNGHNGDSQSFPVSPLTSNEKNLKHFQHQSPTVPNCLSTMGQNCGAGLNNDSPEALEVPSLQDFNVFSTDSCLQLSDAVSPSLPGSLDSPVDISADSFDFFTDTLTTIDLQHLNY</sequence>
<comment type="function">
    <text evidence="1">Sequence-specific transcription factor which is part of a developmental regulatory system that provides cells with specific positional identities on the anterior-posterior axis.</text>
</comment>
<comment type="subcellular location">
    <subcellularLocation>
        <location evidence="2">Nucleus</location>
    </subcellularLocation>
</comment>
<comment type="similarity">
    <text evidence="4">Belongs to the Antp homeobox family. Proboscipedia subfamily.</text>
</comment>
<accession>B0VXK3</accession>
<proteinExistence type="inferred from homology"/>
<name>HXA2_CALJA</name>
<gene>
    <name type="primary">HOXA2</name>
</gene>